<proteinExistence type="inferred from homology"/>
<reference key="1">
    <citation type="journal article" date="2004" name="Proc. Natl. Acad. Sci. U.S.A.">
        <title>Insights into the evolution of Yersinia pestis through whole-genome comparison with Yersinia pseudotuberculosis.</title>
        <authorList>
            <person name="Chain P.S.G."/>
            <person name="Carniel E."/>
            <person name="Larimer F.W."/>
            <person name="Lamerdin J."/>
            <person name="Stoutland P.O."/>
            <person name="Regala W.M."/>
            <person name="Georgescu A.M."/>
            <person name="Vergez L.M."/>
            <person name="Land M.L."/>
            <person name="Motin V.L."/>
            <person name="Brubaker R.R."/>
            <person name="Fowler J."/>
            <person name="Hinnebusch J."/>
            <person name="Marceau M."/>
            <person name="Medigue C."/>
            <person name="Simonet M."/>
            <person name="Chenal-Francisque V."/>
            <person name="Souza B."/>
            <person name="Dacheux D."/>
            <person name="Elliott J.M."/>
            <person name="Derbise A."/>
            <person name="Hauser L.J."/>
            <person name="Garcia E."/>
        </authorList>
    </citation>
    <scope>NUCLEOTIDE SEQUENCE [LARGE SCALE GENOMIC DNA]</scope>
    <source>
        <strain>IP32953</strain>
    </source>
</reference>
<gene>
    <name evidence="1" type="primary">dxs</name>
    <name type="ordered locus">YPTB0939</name>
</gene>
<organism>
    <name type="scientific">Yersinia pseudotuberculosis serotype I (strain IP32953)</name>
    <dbReference type="NCBI Taxonomy" id="273123"/>
    <lineage>
        <taxon>Bacteria</taxon>
        <taxon>Pseudomonadati</taxon>
        <taxon>Pseudomonadota</taxon>
        <taxon>Gammaproteobacteria</taxon>
        <taxon>Enterobacterales</taxon>
        <taxon>Yersiniaceae</taxon>
        <taxon>Yersinia</taxon>
    </lineage>
</organism>
<keyword id="KW-0414">Isoprene biosynthesis</keyword>
<keyword id="KW-0460">Magnesium</keyword>
<keyword id="KW-0479">Metal-binding</keyword>
<keyword id="KW-0784">Thiamine biosynthesis</keyword>
<keyword id="KW-0786">Thiamine pyrophosphate</keyword>
<keyword id="KW-0808">Transferase</keyword>
<protein>
    <recommendedName>
        <fullName evidence="1">1-deoxy-D-xylulose-5-phosphate synthase</fullName>
        <ecNumber evidence="1">2.2.1.7</ecNumber>
    </recommendedName>
    <alternativeName>
        <fullName evidence="1">1-deoxyxylulose-5-phosphate synthase</fullName>
        <shortName evidence="1">DXP synthase</shortName>
        <shortName evidence="1">DXPS</shortName>
    </alternativeName>
</protein>
<sequence length="619" mass="67686">MSLDIAKYPTLALAENPEELRMLPKESLPKLCDELRQYLLTCVSRSSGHFASGLGVVELTVALHYVYNTPFDHLIWDVGHQAYPHKILTGRRDRISTIRQKDGLHPFPWRGESEYDVLSVGHSSTSISAGLGMAVAAEREGKGRRTVCVIGDGAITAGMAFEAMSHAGDIHSDMLVILNDNEMSISENVGGLNNHLAQLLSGKLYASLREGGKKAFSALPPIKDLLKRTEEHLKGMVVPSTLFEELGFNYIGPVDGHDVHTLTQTLKNMRDLKGPQLLHIMTKKGKGYAPAEKDPIGWHAVPKFDPASGTLPKSQSSLPTYSKIFGEWLCETAAKDSKLMAVTPAMREGSGMVRFSREYPQQYFDVAIAEQHAVTFAAGLAIGGYKPVVAIYSTFLQRAYDQLIHDVAIQNLPVLFAIDRGGLVGADGQTHQGAFDLSFMRCIPNMVIMAPSDENECRQMLYTGYHHNGPAAVRYPRGNGTGAVLEPLEMLPIGKGVLRREGEKIAILCFGTLLAQAQLAAENLNATLVDMRFVKPLDEELVLEMAAKHQVLVTVEENAIMGGAGSGVNELLMAKRRWVPVLNIGLPDLFVPQGEQDEMRSELGLDAAGIQRQIEAWLA</sequence>
<dbReference type="EC" id="2.2.1.7" evidence="1"/>
<dbReference type="EMBL" id="BX936398">
    <property type="protein sequence ID" value="CAH20179.1"/>
    <property type="molecule type" value="Genomic_DNA"/>
</dbReference>
<dbReference type="RefSeq" id="WP_011191862.1">
    <property type="nucleotide sequence ID" value="NC_006155.1"/>
</dbReference>
<dbReference type="SMR" id="Q66DV4"/>
<dbReference type="GeneID" id="49787005"/>
<dbReference type="KEGG" id="ypo:BZ17_1607"/>
<dbReference type="KEGG" id="yps:YPTB0939"/>
<dbReference type="PATRIC" id="fig|273123.14.peg.1705"/>
<dbReference type="UniPathway" id="UPA00064">
    <property type="reaction ID" value="UER00091"/>
</dbReference>
<dbReference type="Proteomes" id="UP000001011">
    <property type="component" value="Chromosome"/>
</dbReference>
<dbReference type="GO" id="GO:0005829">
    <property type="term" value="C:cytosol"/>
    <property type="evidence" value="ECO:0007669"/>
    <property type="project" value="TreeGrafter"/>
</dbReference>
<dbReference type="GO" id="GO:0008661">
    <property type="term" value="F:1-deoxy-D-xylulose-5-phosphate synthase activity"/>
    <property type="evidence" value="ECO:0007669"/>
    <property type="project" value="UniProtKB-UniRule"/>
</dbReference>
<dbReference type="GO" id="GO:0000287">
    <property type="term" value="F:magnesium ion binding"/>
    <property type="evidence" value="ECO:0007669"/>
    <property type="project" value="UniProtKB-UniRule"/>
</dbReference>
<dbReference type="GO" id="GO:0030976">
    <property type="term" value="F:thiamine pyrophosphate binding"/>
    <property type="evidence" value="ECO:0007669"/>
    <property type="project" value="UniProtKB-UniRule"/>
</dbReference>
<dbReference type="GO" id="GO:0052865">
    <property type="term" value="P:1-deoxy-D-xylulose 5-phosphate biosynthetic process"/>
    <property type="evidence" value="ECO:0007669"/>
    <property type="project" value="UniProtKB-UniPathway"/>
</dbReference>
<dbReference type="GO" id="GO:0019288">
    <property type="term" value="P:isopentenyl diphosphate biosynthetic process, methylerythritol 4-phosphate pathway"/>
    <property type="evidence" value="ECO:0007669"/>
    <property type="project" value="TreeGrafter"/>
</dbReference>
<dbReference type="GO" id="GO:0016114">
    <property type="term" value="P:terpenoid biosynthetic process"/>
    <property type="evidence" value="ECO:0007669"/>
    <property type="project" value="UniProtKB-UniRule"/>
</dbReference>
<dbReference type="GO" id="GO:0009228">
    <property type="term" value="P:thiamine biosynthetic process"/>
    <property type="evidence" value="ECO:0007669"/>
    <property type="project" value="UniProtKB-UniRule"/>
</dbReference>
<dbReference type="CDD" id="cd02007">
    <property type="entry name" value="TPP_DXS"/>
    <property type="match status" value="1"/>
</dbReference>
<dbReference type="CDD" id="cd07033">
    <property type="entry name" value="TPP_PYR_DXS_TK_like"/>
    <property type="match status" value="1"/>
</dbReference>
<dbReference type="FunFam" id="3.40.50.920:FF:000002">
    <property type="entry name" value="1-deoxy-D-xylulose-5-phosphate synthase"/>
    <property type="match status" value="1"/>
</dbReference>
<dbReference type="FunFam" id="3.40.50.970:FF:000005">
    <property type="entry name" value="1-deoxy-D-xylulose-5-phosphate synthase"/>
    <property type="match status" value="1"/>
</dbReference>
<dbReference type="Gene3D" id="3.40.50.920">
    <property type="match status" value="1"/>
</dbReference>
<dbReference type="Gene3D" id="3.40.50.970">
    <property type="match status" value="2"/>
</dbReference>
<dbReference type="HAMAP" id="MF_00315">
    <property type="entry name" value="DXP_synth"/>
    <property type="match status" value="1"/>
</dbReference>
<dbReference type="InterPro" id="IPR005477">
    <property type="entry name" value="Dxylulose-5-P_synthase"/>
</dbReference>
<dbReference type="InterPro" id="IPR029061">
    <property type="entry name" value="THDP-binding"/>
</dbReference>
<dbReference type="InterPro" id="IPR009014">
    <property type="entry name" value="Transketo_C/PFOR_II"/>
</dbReference>
<dbReference type="InterPro" id="IPR005475">
    <property type="entry name" value="Transketolase-like_Pyr-bd"/>
</dbReference>
<dbReference type="InterPro" id="IPR020826">
    <property type="entry name" value="Transketolase_BS"/>
</dbReference>
<dbReference type="InterPro" id="IPR033248">
    <property type="entry name" value="Transketolase_C"/>
</dbReference>
<dbReference type="InterPro" id="IPR049557">
    <property type="entry name" value="Transketolase_CS"/>
</dbReference>
<dbReference type="NCBIfam" id="TIGR00204">
    <property type="entry name" value="dxs"/>
    <property type="match status" value="1"/>
</dbReference>
<dbReference type="NCBIfam" id="NF003933">
    <property type="entry name" value="PRK05444.2-2"/>
    <property type="match status" value="1"/>
</dbReference>
<dbReference type="PANTHER" id="PTHR43322">
    <property type="entry name" value="1-D-DEOXYXYLULOSE 5-PHOSPHATE SYNTHASE-RELATED"/>
    <property type="match status" value="1"/>
</dbReference>
<dbReference type="PANTHER" id="PTHR43322:SF5">
    <property type="entry name" value="1-DEOXY-D-XYLULOSE-5-PHOSPHATE SYNTHASE, CHLOROPLASTIC"/>
    <property type="match status" value="1"/>
</dbReference>
<dbReference type="Pfam" id="PF13292">
    <property type="entry name" value="DXP_synthase_N"/>
    <property type="match status" value="1"/>
</dbReference>
<dbReference type="Pfam" id="PF02779">
    <property type="entry name" value="Transket_pyr"/>
    <property type="match status" value="1"/>
</dbReference>
<dbReference type="Pfam" id="PF02780">
    <property type="entry name" value="Transketolase_C"/>
    <property type="match status" value="1"/>
</dbReference>
<dbReference type="SMART" id="SM00861">
    <property type="entry name" value="Transket_pyr"/>
    <property type="match status" value="1"/>
</dbReference>
<dbReference type="SUPFAM" id="SSF52518">
    <property type="entry name" value="Thiamin diphosphate-binding fold (THDP-binding)"/>
    <property type="match status" value="2"/>
</dbReference>
<dbReference type="SUPFAM" id="SSF52922">
    <property type="entry name" value="TK C-terminal domain-like"/>
    <property type="match status" value="1"/>
</dbReference>
<dbReference type="PROSITE" id="PS00801">
    <property type="entry name" value="TRANSKETOLASE_1"/>
    <property type="match status" value="1"/>
</dbReference>
<dbReference type="PROSITE" id="PS00802">
    <property type="entry name" value="TRANSKETOLASE_2"/>
    <property type="match status" value="1"/>
</dbReference>
<name>DXS_YERPS</name>
<accession>Q66DV4</accession>
<comment type="function">
    <text evidence="1">Catalyzes the acyloin condensation reaction between C atoms 2 and 3 of pyruvate and glyceraldehyde 3-phosphate to yield 1-deoxy-D-xylulose-5-phosphate (DXP).</text>
</comment>
<comment type="catalytic activity">
    <reaction evidence="1">
        <text>D-glyceraldehyde 3-phosphate + pyruvate + H(+) = 1-deoxy-D-xylulose 5-phosphate + CO2</text>
        <dbReference type="Rhea" id="RHEA:12605"/>
        <dbReference type="ChEBI" id="CHEBI:15361"/>
        <dbReference type="ChEBI" id="CHEBI:15378"/>
        <dbReference type="ChEBI" id="CHEBI:16526"/>
        <dbReference type="ChEBI" id="CHEBI:57792"/>
        <dbReference type="ChEBI" id="CHEBI:59776"/>
        <dbReference type="EC" id="2.2.1.7"/>
    </reaction>
</comment>
<comment type="cofactor">
    <cofactor evidence="1">
        <name>Mg(2+)</name>
        <dbReference type="ChEBI" id="CHEBI:18420"/>
    </cofactor>
    <text evidence="1">Binds 1 Mg(2+) ion per subunit.</text>
</comment>
<comment type="cofactor">
    <cofactor evidence="1">
        <name>thiamine diphosphate</name>
        <dbReference type="ChEBI" id="CHEBI:58937"/>
    </cofactor>
    <text evidence="1">Binds 1 thiamine pyrophosphate per subunit.</text>
</comment>
<comment type="pathway">
    <text evidence="1">Metabolic intermediate biosynthesis; 1-deoxy-D-xylulose 5-phosphate biosynthesis; 1-deoxy-D-xylulose 5-phosphate from D-glyceraldehyde 3-phosphate and pyruvate: step 1/1.</text>
</comment>
<comment type="subunit">
    <text evidence="1">Homodimer.</text>
</comment>
<comment type="similarity">
    <text evidence="1">Belongs to the transketolase family. DXPS subfamily.</text>
</comment>
<evidence type="ECO:0000255" key="1">
    <source>
        <dbReference type="HAMAP-Rule" id="MF_00315"/>
    </source>
</evidence>
<feature type="chain" id="PRO_0000256509" description="1-deoxy-D-xylulose-5-phosphate synthase">
    <location>
        <begin position="1"/>
        <end position="619"/>
    </location>
</feature>
<feature type="binding site" evidence="1">
    <location>
        <position position="80"/>
    </location>
    <ligand>
        <name>thiamine diphosphate</name>
        <dbReference type="ChEBI" id="CHEBI:58937"/>
    </ligand>
</feature>
<feature type="binding site" evidence="1">
    <location>
        <begin position="121"/>
        <end position="123"/>
    </location>
    <ligand>
        <name>thiamine diphosphate</name>
        <dbReference type="ChEBI" id="CHEBI:58937"/>
    </ligand>
</feature>
<feature type="binding site" evidence="1">
    <location>
        <position position="152"/>
    </location>
    <ligand>
        <name>Mg(2+)</name>
        <dbReference type="ChEBI" id="CHEBI:18420"/>
    </ligand>
</feature>
<feature type="binding site" evidence="1">
    <location>
        <begin position="153"/>
        <end position="154"/>
    </location>
    <ligand>
        <name>thiamine diphosphate</name>
        <dbReference type="ChEBI" id="CHEBI:58937"/>
    </ligand>
</feature>
<feature type="binding site" evidence="1">
    <location>
        <position position="181"/>
    </location>
    <ligand>
        <name>Mg(2+)</name>
        <dbReference type="ChEBI" id="CHEBI:18420"/>
    </ligand>
</feature>
<feature type="binding site" evidence="1">
    <location>
        <position position="181"/>
    </location>
    <ligand>
        <name>thiamine diphosphate</name>
        <dbReference type="ChEBI" id="CHEBI:58937"/>
    </ligand>
</feature>
<feature type="binding site" evidence="1">
    <location>
        <position position="288"/>
    </location>
    <ligand>
        <name>thiamine diphosphate</name>
        <dbReference type="ChEBI" id="CHEBI:58937"/>
    </ligand>
</feature>
<feature type="binding site" evidence="1">
    <location>
        <position position="370"/>
    </location>
    <ligand>
        <name>thiamine diphosphate</name>
        <dbReference type="ChEBI" id="CHEBI:58937"/>
    </ligand>
</feature>